<reference key="1">
    <citation type="submission" date="2008-10" db="EMBL/GenBank/DDBJ databases">
        <title>Genome sequence of Bacillus cereus AH187.</title>
        <authorList>
            <person name="Dodson R.J."/>
            <person name="Durkin A.S."/>
            <person name="Rosovitz M.J."/>
            <person name="Rasko D.A."/>
            <person name="Kolsto A.B."/>
            <person name="Okstad O.A."/>
            <person name="Ravel J."/>
            <person name="Sutton G."/>
        </authorList>
    </citation>
    <scope>NUCLEOTIDE SEQUENCE [LARGE SCALE GENOMIC DNA]</scope>
    <source>
        <strain>AH187</strain>
    </source>
</reference>
<name>EFP_BACC7</name>
<accession>B7HNW0</accession>
<protein>
    <recommendedName>
        <fullName evidence="1">Elongation factor P</fullName>
        <shortName evidence="1">EF-P</shortName>
    </recommendedName>
</protein>
<organism>
    <name type="scientific">Bacillus cereus (strain AH187)</name>
    <dbReference type="NCBI Taxonomy" id="405534"/>
    <lineage>
        <taxon>Bacteria</taxon>
        <taxon>Bacillati</taxon>
        <taxon>Bacillota</taxon>
        <taxon>Bacilli</taxon>
        <taxon>Bacillales</taxon>
        <taxon>Bacillaceae</taxon>
        <taxon>Bacillus</taxon>
        <taxon>Bacillus cereus group</taxon>
    </lineage>
</organism>
<keyword id="KW-0963">Cytoplasm</keyword>
<keyword id="KW-0251">Elongation factor</keyword>
<keyword id="KW-0648">Protein biosynthesis</keyword>
<dbReference type="EMBL" id="CP001177">
    <property type="protein sequence ID" value="ACJ81496.1"/>
    <property type="molecule type" value="Genomic_DNA"/>
</dbReference>
<dbReference type="SMR" id="B7HNW0"/>
<dbReference type="KEGG" id="bcr:BCAH187_A4327"/>
<dbReference type="HOGENOM" id="CLU_074944_0_1_9"/>
<dbReference type="UniPathway" id="UPA00345"/>
<dbReference type="Proteomes" id="UP000002214">
    <property type="component" value="Chromosome"/>
</dbReference>
<dbReference type="GO" id="GO:0005737">
    <property type="term" value="C:cytoplasm"/>
    <property type="evidence" value="ECO:0007669"/>
    <property type="project" value="UniProtKB-SubCell"/>
</dbReference>
<dbReference type="GO" id="GO:0003746">
    <property type="term" value="F:translation elongation factor activity"/>
    <property type="evidence" value="ECO:0007669"/>
    <property type="project" value="UniProtKB-UniRule"/>
</dbReference>
<dbReference type="GO" id="GO:0043043">
    <property type="term" value="P:peptide biosynthetic process"/>
    <property type="evidence" value="ECO:0007669"/>
    <property type="project" value="InterPro"/>
</dbReference>
<dbReference type="CDD" id="cd04470">
    <property type="entry name" value="S1_EF-P_repeat_1"/>
    <property type="match status" value="1"/>
</dbReference>
<dbReference type="CDD" id="cd05794">
    <property type="entry name" value="S1_EF-P_repeat_2"/>
    <property type="match status" value="1"/>
</dbReference>
<dbReference type="FunFam" id="2.30.30.30:FF:000010">
    <property type="entry name" value="Elongation factor P"/>
    <property type="match status" value="1"/>
</dbReference>
<dbReference type="FunFam" id="2.40.50.140:FF:000004">
    <property type="entry name" value="Elongation factor P"/>
    <property type="match status" value="1"/>
</dbReference>
<dbReference type="FunFam" id="2.40.50.140:FF:000009">
    <property type="entry name" value="Elongation factor P"/>
    <property type="match status" value="1"/>
</dbReference>
<dbReference type="Gene3D" id="2.30.30.30">
    <property type="match status" value="1"/>
</dbReference>
<dbReference type="Gene3D" id="2.40.50.140">
    <property type="entry name" value="Nucleic acid-binding proteins"/>
    <property type="match status" value="2"/>
</dbReference>
<dbReference type="HAMAP" id="MF_00141">
    <property type="entry name" value="EF_P"/>
    <property type="match status" value="1"/>
</dbReference>
<dbReference type="InterPro" id="IPR015365">
    <property type="entry name" value="Elong-fact-P_C"/>
</dbReference>
<dbReference type="InterPro" id="IPR012340">
    <property type="entry name" value="NA-bd_OB-fold"/>
</dbReference>
<dbReference type="InterPro" id="IPR014722">
    <property type="entry name" value="Rib_uL2_dom2"/>
</dbReference>
<dbReference type="InterPro" id="IPR020599">
    <property type="entry name" value="Transl_elong_fac_P/YeiP"/>
</dbReference>
<dbReference type="InterPro" id="IPR013185">
    <property type="entry name" value="Transl_elong_KOW-like"/>
</dbReference>
<dbReference type="InterPro" id="IPR001059">
    <property type="entry name" value="Transl_elong_P/YeiP_cen"/>
</dbReference>
<dbReference type="InterPro" id="IPR013852">
    <property type="entry name" value="Transl_elong_P/YeiP_CS"/>
</dbReference>
<dbReference type="InterPro" id="IPR011768">
    <property type="entry name" value="Transl_elongation_fac_P"/>
</dbReference>
<dbReference type="InterPro" id="IPR008991">
    <property type="entry name" value="Translation_prot_SH3-like_sf"/>
</dbReference>
<dbReference type="NCBIfam" id="TIGR00038">
    <property type="entry name" value="efp"/>
    <property type="match status" value="1"/>
</dbReference>
<dbReference type="NCBIfam" id="NF001810">
    <property type="entry name" value="PRK00529.1"/>
    <property type="match status" value="1"/>
</dbReference>
<dbReference type="PANTHER" id="PTHR30053">
    <property type="entry name" value="ELONGATION FACTOR P"/>
    <property type="match status" value="1"/>
</dbReference>
<dbReference type="PANTHER" id="PTHR30053:SF12">
    <property type="entry name" value="ELONGATION FACTOR P (EF-P) FAMILY PROTEIN"/>
    <property type="match status" value="1"/>
</dbReference>
<dbReference type="Pfam" id="PF01132">
    <property type="entry name" value="EFP"/>
    <property type="match status" value="1"/>
</dbReference>
<dbReference type="Pfam" id="PF08207">
    <property type="entry name" value="EFP_N"/>
    <property type="match status" value="1"/>
</dbReference>
<dbReference type="Pfam" id="PF09285">
    <property type="entry name" value="Elong-fact-P_C"/>
    <property type="match status" value="1"/>
</dbReference>
<dbReference type="PIRSF" id="PIRSF005901">
    <property type="entry name" value="EF-P"/>
    <property type="match status" value="1"/>
</dbReference>
<dbReference type="SMART" id="SM01185">
    <property type="entry name" value="EFP"/>
    <property type="match status" value="1"/>
</dbReference>
<dbReference type="SMART" id="SM00841">
    <property type="entry name" value="Elong-fact-P_C"/>
    <property type="match status" value="1"/>
</dbReference>
<dbReference type="SUPFAM" id="SSF50249">
    <property type="entry name" value="Nucleic acid-binding proteins"/>
    <property type="match status" value="2"/>
</dbReference>
<dbReference type="SUPFAM" id="SSF50104">
    <property type="entry name" value="Translation proteins SH3-like domain"/>
    <property type="match status" value="1"/>
</dbReference>
<dbReference type="PROSITE" id="PS01275">
    <property type="entry name" value="EFP"/>
    <property type="match status" value="1"/>
</dbReference>
<sequence>MISVNDFRTGLTIAVDNGLWQVLDFQHVKPGKGAAFVRSKLRNLRTGSVQEKTFRAGEKVEKAHIENRRMQYLYASGESHVFMDNGTYEQIELGEKQIERELKFLKENMEVSIMTYQGEVLGVELPNTVELQVTETEPGIKGDTASNVTKPATLETGLVVQVPIFINEGETLIINTGEGKYVSRA</sequence>
<comment type="function">
    <text evidence="1">Involved in peptide bond synthesis. Stimulates efficient translation and peptide-bond synthesis on native or reconstituted 70S ribosomes in vitro. Probably functions indirectly by altering the affinity of the ribosome for aminoacyl-tRNA, thus increasing their reactivity as acceptors for peptidyl transferase.</text>
</comment>
<comment type="pathway">
    <text evidence="1">Protein biosynthesis; polypeptide chain elongation.</text>
</comment>
<comment type="subcellular location">
    <subcellularLocation>
        <location evidence="1">Cytoplasm</location>
    </subcellularLocation>
</comment>
<comment type="similarity">
    <text evidence="1">Belongs to the elongation factor P family.</text>
</comment>
<gene>
    <name evidence="1" type="primary">efp</name>
    <name type="ordered locus">BCAH187_A4327</name>
</gene>
<proteinExistence type="inferred from homology"/>
<feature type="chain" id="PRO_1000117887" description="Elongation factor P">
    <location>
        <begin position="1"/>
        <end position="185"/>
    </location>
</feature>
<evidence type="ECO:0000255" key="1">
    <source>
        <dbReference type="HAMAP-Rule" id="MF_00141"/>
    </source>
</evidence>